<keyword id="KW-0963">Cytoplasm</keyword>
<comment type="subcellular location">
    <subcellularLocation>
        <location evidence="1">Cytoplasm</location>
        <location evidence="1">Nucleoid</location>
    </subcellularLocation>
</comment>
<comment type="similarity">
    <text evidence="1">Belongs to the YejK family.</text>
</comment>
<dbReference type="EMBL" id="CP000946">
    <property type="protein sequence ID" value="ACA77124.1"/>
    <property type="molecule type" value="Genomic_DNA"/>
</dbReference>
<dbReference type="RefSeq" id="WP_000050793.1">
    <property type="nucleotide sequence ID" value="NZ_MTFT01000031.1"/>
</dbReference>
<dbReference type="SMR" id="B1IY83"/>
<dbReference type="KEGG" id="ecl:EcolC_1461"/>
<dbReference type="HOGENOM" id="CLU_063050_0_1_6"/>
<dbReference type="GO" id="GO:0043590">
    <property type="term" value="C:bacterial nucleoid"/>
    <property type="evidence" value="ECO:0007669"/>
    <property type="project" value="TreeGrafter"/>
</dbReference>
<dbReference type="GO" id="GO:0005737">
    <property type="term" value="C:cytoplasm"/>
    <property type="evidence" value="ECO:0007669"/>
    <property type="project" value="UniProtKB-UniRule"/>
</dbReference>
<dbReference type="GO" id="GO:0003690">
    <property type="term" value="F:double-stranded DNA binding"/>
    <property type="evidence" value="ECO:0007669"/>
    <property type="project" value="TreeGrafter"/>
</dbReference>
<dbReference type="GO" id="GO:0003727">
    <property type="term" value="F:single-stranded RNA binding"/>
    <property type="evidence" value="ECO:0007669"/>
    <property type="project" value="TreeGrafter"/>
</dbReference>
<dbReference type="HAMAP" id="MF_00730">
    <property type="entry name" value="NdpA"/>
    <property type="match status" value="1"/>
</dbReference>
<dbReference type="InterPro" id="IPR007358">
    <property type="entry name" value="Nucleoid_associated_NdpA"/>
</dbReference>
<dbReference type="NCBIfam" id="NF001557">
    <property type="entry name" value="PRK00378.1"/>
    <property type="match status" value="1"/>
</dbReference>
<dbReference type="PANTHER" id="PTHR38772">
    <property type="match status" value="1"/>
</dbReference>
<dbReference type="PANTHER" id="PTHR38772:SF1">
    <property type="entry name" value="NUCLEOID-ASSOCIATED PROTEIN YEJK"/>
    <property type="match status" value="1"/>
</dbReference>
<dbReference type="Pfam" id="PF04245">
    <property type="entry name" value="NA37"/>
    <property type="match status" value="1"/>
</dbReference>
<reference key="1">
    <citation type="submission" date="2008-02" db="EMBL/GenBank/DDBJ databases">
        <title>Complete sequence of Escherichia coli C str. ATCC 8739.</title>
        <authorList>
            <person name="Copeland A."/>
            <person name="Lucas S."/>
            <person name="Lapidus A."/>
            <person name="Glavina del Rio T."/>
            <person name="Dalin E."/>
            <person name="Tice H."/>
            <person name="Bruce D."/>
            <person name="Goodwin L."/>
            <person name="Pitluck S."/>
            <person name="Kiss H."/>
            <person name="Brettin T."/>
            <person name="Detter J.C."/>
            <person name="Han C."/>
            <person name="Kuske C.R."/>
            <person name="Schmutz J."/>
            <person name="Larimer F."/>
            <person name="Land M."/>
            <person name="Hauser L."/>
            <person name="Kyrpides N."/>
            <person name="Mikhailova N."/>
            <person name="Ingram L."/>
            <person name="Richardson P."/>
        </authorList>
    </citation>
    <scope>NUCLEOTIDE SEQUENCE [LARGE SCALE GENOMIC DNA]</scope>
    <source>
        <strain>ATCC 8739 / DSM 1576 / NBRC 3972 / NCIMB 8545 / WDCM 00012 / Crooks</strain>
    </source>
</reference>
<proteinExistence type="inferred from homology"/>
<sequence>MSLDINQIALHQLIKRDEQNLELVLRDSLLEPTETVVEMVAELHRVYSAKNKAYGLFSEESELAQTLRLQRQGEEDFLAFSRAATGRLRDELAKYPFADGGFVLFCHYRYLAVEYLLVAVLSNLSSMRVNENLDINPTHYLDINHADIVARIDLTEWETNPESTRYLTFLKGRVGRKVADFFMDFLGASEGLNAKAQNRGLLQAVDDFTAEAQLDKAERQNVRQQVYSYCNEQLQAGEEIELKSLSKELAGVSEVSFTEFAAEKGYELEESFPADRSTLRQLTKFAGSGGGLTINFDAMLLGERIFWDPATDTLTIKGTPPNLRDQLQRRTSGGN</sequence>
<evidence type="ECO:0000255" key="1">
    <source>
        <dbReference type="HAMAP-Rule" id="MF_00730"/>
    </source>
</evidence>
<organism>
    <name type="scientific">Escherichia coli (strain ATCC 8739 / DSM 1576 / NBRC 3972 / NCIMB 8545 / WDCM 00012 / Crooks)</name>
    <dbReference type="NCBI Taxonomy" id="481805"/>
    <lineage>
        <taxon>Bacteria</taxon>
        <taxon>Pseudomonadati</taxon>
        <taxon>Pseudomonadota</taxon>
        <taxon>Gammaproteobacteria</taxon>
        <taxon>Enterobacterales</taxon>
        <taxon>Enterobacteriaceae</taxon>
        <taxon>Escherichia</taxon>
    </lineage>
</organism>
<name>NDPA_ECOLC</name>
<gene>
    <name evidence="1" type="primary">yejK</name>
    <name type="ordered locus">EcolC_1461</name>
</gene>
<protein>
    <recommendedName>
        <fullName evidence="1">Nucleoid-associated protein YejK</fullName>
    </recommendedName>
</protein>
<accession>B1IY83</accession>
<feature type="chain" id="PRO_1000083327" description="Nucleoid-associated protein YejK">
    <location>
        <begin position="1"/>
        <end position="335"/>
    </location>
</feature>